<keyword id="KW-0028">Amino-acid biosynthesis</keyword>
<keyword id="KW-0223">Dioxygenase</keyword>
<keyword id="KW-0408">Iron</keyword>
<keyword id="KW-0479">Metal-binding</keyword>
<keyword id="KW-0486">Methionine biosynthesis</keyword>
<keyword id="KW-0533">Nickel</keyword>
<keyword id="KW-0560">Oxidoreductase</keyword>
<organism>
    <name type="scientific">Prochlorococcus marinus (strain MIT 9303)</name>
    <dbReference type="NCBI Taxonomy" id="59922"/>
    <lineage>
        <taxon>Bacteria</taxon>
        <taxon>Bacillati</taxon>
        <taxon>Cyanobacteriota</taxon>
        <taxon>Cyanophyceae</taxon>
        <taxon>Synechococcales</taxon>
        <taxon>Prochlorococcaceae</taxon>
        <taxon>Prochlorococcus</taxon>
    </lineage>
</organism>
<dbReference type="EC" id="1.13.11.54" evidence="1"/>
<dbReference type="EC" id="1.13.11.53" evidence="1"/>
<dbReference type="EMBL" id="CP000554">
    <property type="protein sequence ID" value="ABM78895.1"/>
    <property type="status" value="ALT_INIT"/>
    <property type="molecule type" value="Genomic_DNA"/>
</dbReference>
<dbReference type="RefSeq" id="WP_041374893.1">
    <property type="nucleotide sequence ID" value="NC_008820.1"/>
</dbReference>
<dbReference type="SMR" id="A2CBN5"/>
<dbReference type="STRING" id="59922.P9303_21601"/>
<dbReference type="KEGG" id="pmf:P9303_21601"/>
<dbReference type="HOGENOM" id="CLU_125400_0_0_3"/>
<dbReference type="BioCyc" id="PMAR59922:G1G80-1887-MONOMER"/>
<dbReference type="UniPathway" id="UPA00904">
    <property type="reaction ID" value="UER00878"/>
</dbReference>
<dbReference type="Proteomes" id="UP000002274">
    <property type="component" value="Chromosome"/>
</dbReference>
<dbReference type="GO" id="GO:0010308">
    <property type="term" value="F:acireductone dioxygenase (Ni2+-requiring) activity"/>
    <property type="evidence" value="ECO:0007669"/>
    <property type="project" value="UniProtKB-UniRule"/>
</dbReference>
<dbReference type="GO" id="GO:0010309">
    <property type="term" value="F:acireductone dioxygenase [iron(II)-requiring] activity"/>
    <property type="evidence" value="ECO:0007669"/>
    <property type="project" value="UniProtKB-UniRule"/>
</dbReference>
<dbReference type="GO" id="GO:0005506">
    <property type="term" value="F:iron ion binding"/>
    <property type="evidence" value="ECO:0007669"/>
    <property type="project" value="UniProtKB-UniRule"/>
</dbReference>
<dbReference type="GO" id="GO:0016151">
    <property type="term" value="F:nickel cation binding"/>
    <property type="evidence" value="ECO:0007669"/>
    <property type="project" value="UniProtKB-UniRule"/>
</dbReference>
<dbReference type="GO" id="GO:0019509">
    <property type="term" value="P:L-methionine salvage from methylthioadenosine"/>
    <property type="evidence" value="ECO:0007669"/>
    <property type="project" value="UniProtKB-UniRule"/>
</dbReference>
<dbReference type="GO" id="GO:0019284">
    <property type="term" value="P:L-methionine salvage from S-adenosylmethionine"/>
    <property type="evidence" value="ECO:0007669"/>
    <property type="project" value="InterPro"/>
</dbReference>
<dbReference type="CDD" id="cd02232">
    <property type="entry name" value="cupin_ARD"/>
    <property type="match status" value="1"/>
</dbReference>
<dbReference type="Gene3D" id="2.60.120.10">
    <property type="entry name" value="Jelly Rolls"/>
    <property type="match status" value="1"/>
</dbReference>
<dbReference type="HAMAP" id="MF_01682">
    <property type="entry name" value="Salvage_MtnD"/>
    <property type="match status" value="1"/>
</dbReference>
<dbReference type="InterPro" id="IPR004313">
    <property type="entry name" value="ARD"/>
</dbReference>
<dbReference type="InterPro" id="IPR023956">
    <property type="entry name" value="ARD_bac"/>
</dbReference>
<dbReference type="InterPro" id="IPR014710">
    <property type="entry name" value="RmlC-like_jellyroll"/>
</dbReference>
<dbReference type="InterPro" id="IPR011051">
    <property type="entry name" value="RmlC_Cupin_sf"/>
</dbReference>
<dbReference type="PANTHER" id="PTHR23418">
    <property type="entry name" value="ACIREDUCTONE DIOXYGENASE"/>
    <property type="match status" value="1"/>
</dbReference>
<dbReference type="PANTHER" id="PTHR23418:SF0">
    <property type="entry name" value="ACIREDUCTONE DIOXYGENASE"/>
    <property type="match status" value="1"/>
</dbReference>
<dbReference type="Pfam" id="PF03079">
    <property type="entry name" value="ARD"/>
    <property type="match status" value="1"/>
</dbReference>
<dbReference type="SUPFAM" id="SSF51182">
    <property type="entry name" value="RmlC-like cupins"/>
    <property type="match status" value="1"/>
</dbReference>
<evidence type="ECO:0000255" key="1">
    <source>
        <dbReference type="HAMAP-Rule" id="MF_01682"/>
    </source>
</evidence>
<evidence type="ECO:0000256" key="2">
    <source>
        <dbReference type="SAM" id="MobiDB-lite"/>
    </source>
</evidence>
<evidence type="ECO:0000305" key="3"/>
<gene>
    <name evidence="1" type="primary">mtnD</name>
    <name type="ordered locus">P9303_21601</name>
</gene>
<name>MTND_PROM3</name>
<sequence>MSRLSIHPEGNTNATSPAEPLLESDDPAVIKAELAKRGIEFQHWPAKVKLHQNSIESDILAAYAVEIARVQADGRYPTVDAIRITPDHPDREALRQKFLAEHTHAEDEVRFFVEGRGLFCLHIGAEVLQVLCEQNDCINVPAGTRHWFDMGSKPQFCAVRFFDNPEGWIASFTGDAIAERFAKLP</sequence>
<accession>A2CBN5</accession>
<protein>
    <recommendedName>
        <fullName evidence="1">Acireductone dioxygenase</fullName>
    </recommendedName>
    <alternativeName>
        <fullName evidence="1">1,2-dihydroxy-3-keto-5-methylthiopentene dioxygenase</fullName>
        <shortName evidence="1">DHK-MTPene dioxygenase</shortName>
    </alternativeName>
    <alternativeName>
        <fullName evidence="1">Acireductone dioxygenase (Fe(2+)-requiring)</fullName>
        <shortName evidence="1">ARD'</shortName>
        <shortName evidence="1">Fe-ARD</shortName>
        <ecNumber evidence="1">1.13.11.54</ecNumber>
    </alternativeName>
    <alternativeName>
        <fullName evidence="1">Acireductone dioxygenase (Ni(2+)-requiring)</fullName>
        <shortName evidence="1">ARD</shortName>
        <shortName evidence="1">Ni-ARD</shortName>
        <ecNumber evidence="1">1.13.11.53</ecNumber>
    </alternativeName>
</protein>
<feature type="chain" id="PRO_0000359215" description="Acireductone dioxygenase">
    <location>
        <begin position="1"/>
        <end position="185"/>
    </location>
</feature>
<feature type="region of interest" description="Disordered" evidence="2">
    <location>
        <begin position="1"/>
        <end position="23"/>
    </location>
</feature>
<feature type="binding site" evidence="1">
    <location>
        <position position="102"/>
    </location>
    <ligand>
        <name>Fe(2+)</name>
        <dbReference type="ChEBI" id="CHEBI:29033"/>
    </ligand>
</feature>
<feature type="binding site" evidence="1">
    <location>
        <position position="102"/>
    </location>
    <ligand>
        <name>Ni(2+)</name>
        <dbReference type="ChEBI" id="CHEBI:49786"/>
    </ligand>
</feature>
<feature type="binding site" evidence="1">
    <location>
        <position position="104"/>
    </location>
    <ligand>
        <name>Fe(2+)</name>
        <dbReference type="ChEBI" id="CHEBI:29033"/>
    </ligand>
</feature>
<feature type="binding site" evidence="1">
    <location>
        <position position="104"/>
    </location>
    <ligand>
        <name>Ni(2+)</name>
        <dbReference type="ChEBI" id="CHEBI:49786"/>
    </ligand>
</feature>
<feature type="binding site" evidence="1">
    <location>
        <position position="108"/>
    </location>
    <ligand>
        <name>Fe(2+)</name>
        <dbReference type="ChEBI" id="CHEBI:29033"/>
    </ligand>
</feature>
<feature type="binding site" evidence="1">
    <location>
        <position position="108"/>
    </location>
    <ligand>
        <name>Ni(2+)</name>
        <dbReference type="ChEBI" id="CHEBI:49786"/>
    </ligand>
</feature>
<feature type="binding site" evidence="1">
    <location>
        <position position="146"/>
    </location>
    <ligand>
        <name>Fe(2+)</name>
        <dbReference type="ChEBI" id="CHEBI:29033"/>
    </ligand>
</feature>
<feature type="binding site" evidence="1">
    <location>
        <position position="146"/>
    </location>
    <ligand>
        <name>Ni(2+)</name>
        <dbReference type="ChEBI" id="CHEBI:49786"/>
    </ligand>
</feature>
<feature type="site" description="May play a role in metal incorporation in vivo" evidence="1">
    <location>
        <position position="101"/>
    </location>
</feature>
<feature type="site" description="May play a role in transmitting local conformational changes" evidence="1">
    <location>
        <position position="107"/>
    </location>
</feature>
<feature type="site" description="Important to generate the dianion" evidence="1">
    <location>
        <position position="110"/>
    </location>
</feature>
<proteinExistence type="inferred from homology"/>
<comment type="function">
    <text evidence="1">Catalyzes 2 different reactions between oxygen and the acireductone 1,2-dihydroxy-3-keto-5-methylthiopentene (DHK-MTPene) depending upon the metal bound in the active site. Fe-containing acireductone dioxygenase (Fe-ARD) produces formate and 2-keto-4-methylthiobutyrate (KMTB), the alpha-ketoacid precursor of methionine in the methionine recycle pathway. Ni-containing acireductone dioxygenase (Ni-ARD) produces methylthiopropionate, carbon monoxide and formate, and does not lie on the methionine recycle pathway.</text>
</comment>
<comment type="catalytic activity">
    <reaction evidence="1">
        <text>1,2-dihydroxy-5-(methylsulfanyl)pent-1-en-3-one + O2 = 3-(methylsulfanyl)propanoate + CO + formate + 2 H(+)</text>
        <dbReference type="Rhea" id="RHEA:14161"/>
        <dbReference type="ChEBI" id="CHEBI:15378"/>
        <dbReference type="ChEBI" id="CHEBI:15379"/>
        <dbReference type="ChEBI" id="CHEBI:15740"/>
        <dbReference type="ChEBI" id="CHEBI:17245"/>
        <dbReference type="ChEBI" id="CHEBI:49016"/>
        <dbReference type="ChEBI" id="CHEBI:49252"/>
        <dbReference type="EC" id="1.13.11.53"/>
    </reaction>
</comment>
<comment type="catalytic activity">
    <reaction evidence="1">
        <text>1,2-dihydroxy-5-(methylsulfanyl)pent-1-en-3-one + O2 = 4-methylsulfanyl-2-oxobutanoate + formate + 2 H(+)</text>
        <dbReference type="Rhea" id="RHEA:24504"/>
        <dbReference type="ChEBI" id="CHEBI:15378"/>
        <dbReference type="ChEBI" id="CHEBI:15379"/>
        <dbReference type="ChEBI" id="CHEBI:15740"/>
        <dbReference type="ChEBI" id="CHEBI:16723"/>
        <dbReference type="ChEBI" id="CHEBI:49252"/>
        <dbReference type="EC" id="1.13.11.54"/>
    </reaction>
</comment>
<comment type="cofactor">
    <cofactor evidence="1">
        <name>Fe(2+)</name>
        <dbReference type="ChEBI" id="CHEBI:29033"/>
    </cofactor>
    <text evidence="1">Binds 1 Fe(2+) cation per monomer.</text>
</comment>
<comment type="cofactor">
    <cofactor evidence="1">
        <name>Ni(2+)</name>
        <dbReference type="ChEBI" id="CHEBI:49786"/>
    </cofactor>
    <text evidence="1">Binds 1 nickel ion per monomer.</text>
</comment>
<comment type="pathway">
    <text evidence="1">Amino-acid biosynthesis; L-methionine biosynthesis via salvage pathway; L-methionine from S-methyl-5-thio-alpha-D-ribose 1-phosphate: step 5/6.</text>
</comment>
<comment type="subunit">
    <text evidence="1">Monomer.</text>
</comment>
<comment type="similarity">
    <text evidence="1">Belongs to the acireductone dioxygenase (ARD) family.</text>
</comment>
<comment type="sequence caution" evidence="3">
    <conflict type="erroneous initiation">
        <sequence resource="EMBL-CDS" id="ABM78895"/>
    </conflict>
</comment>
<reference key="1">
    <citation type="journal article" date="2007" name="PLoS Genet.">
        <title>Patterns and implications of gene gain and loss in the evolution of Prochlorococcus.</title>
        <authorList>
            <person name="Kettler G.C."/>
            <person name="Martiny A.C."/>
            <person name="Huang K."/>
            <person name="Zucker J."/>
            <person name="Coleman M.L."/>
            <person name="Rodrigue S."/>
            <person name="Chen F."/>
            <person name="Lapidus A."/>
            <person name="Ferriera S."/>
            <person name="Johnson J."/>
            <person name="Steglich C."/>
            <person name="Church G.M."/>
            <person name="Richardson P."/>
            <person name="Chisholm S.W."/>
        </authorList>
    </citation>
    <scope>NUCLEOTIDE SEQUENCE [LARGE SCALE GENOMIC DNA]</scope>
    <source>
        <strain>MIT 9303</strain>
    </source>
</reference>